<accession>A0RP96</accession>
<protein>
    <recommendedName>
        <fullName evidence="1">3-dehydroquinate synthase</fullName>
        <shortName evidence="1">DHQS</shortName>
        <ecNumber evidence="1">4.2.3.4</ecNumber>
    </recommendedName>
</protein>
<name>AROB_CAMFF</name>
<organism>
    <name type="scientific">Campylobacter fetus subsp. fetus (strain 82-40)</name>
    <dbReference type="NCBI Taxonomy" id="360106"/>
    <lineage>
        <taxon>Bacteria</taxon>
        <taxon>Pseudomonadati</taxon>
        <taxon>Campylobacterota</taxon>
        <taxon>Epsilonproteobacteria</taxon>
        <taxon>Campylobacterales</taxon>
        <taxon>Campylobacteraceae</taxon>
        <taxon>Campylobacter</taxon>
    </lineage>
</organism>
<evidence type="ECO:0000255" key="1">
    <source>
        <dbReference type="HAMAP-Rule" id="MF_00110"/>
    </source>
</evidence>
<proteinExistence type="inferred from homology"/>
<keyword id="KW-0028">Amino-acid biosynthesis</keyword>
<keyword id="KW-0057">Aromatic amino acid biosynthesis</keyword>
<keyword id="KW-0170">Cobalt</keyword>
<keyword id="KW-0963">Cytoplasm</keyword>
<keyword id="KW-0456">Lyase</keyword>
<keyword id="KW-0479">Metal-binding</keyword>
<keyword id="KW-0520">NAD</keyword>
<keyword id="KW-0547">Nucleotide-binding</keyword>
<keyword id="KW-0862">Zinc</keyword>
<feature type="chain" id="PRO_1000117477" description="3-dehydroquinate synthase">
    <location>
        <begin position="1"/>
        <end position="346"/>
    </location>
</feature>
<feature type="binding site" evidence="1">
    <location>
        <begin position="62"/>
        <end position="67"/>
    </location>
    <ligand>
        <name>NAD(+)</name>
        <dbReference type="ChEBI" id="CHEBI:57540"/>
    </ligand>
</feature>
<feature type="binding site" evidence="1">
    <location>
        <begin position="96"/>
        <end position="100"/>
    </location>
    <ligand>
        <name>NAD(+)</name>
        <dbReference type="ChEBI" id="CHEBI:57540"/>
    </ligand>
</feature>
<feature type="binding site" evidence="1">
    <location>
        <begin position="120"/>
        <end position="121"/>
    </location>
    <ligand>
        <name>NAD(+)</name>
        <dbReference type="ChEBI" id="CHEBI:57540"/>
    </ligand>
</feature>
<feature type="binding site" evidence="1">
    <location>
        <position position="133"/>
    </location>
    <ligand>
        <name>NAD(+)</name>
        <dbReference type="ChEBI" id="CHEBI:57540"/>
    </ligand>
</feature>
<feature type="binding site" evidence="1">
    <location>
        <position position="142"/>
    </location>
    <ligand>
        <name>NAD(+)</name>
        <dbReference type="ChEBI" id="CHEBI:57540"/>
    </ligand>
</feature>
<feature type="binding site" evidence="1">
    <location>
        <position position="175"/>
    </location>
    <ligand>
        <name>Zn(2+)</name>
        <dbReference type="ChEBI" id="CHEBI:29105"/>
    </ligand>
</feature>
<feature type="binding site" evidence="1">
    <location>
        <position position="234"/>
    </location>
    <ligand>
        <name>Zn(2+)</name>
        <dbReference type="ChEBI" id="CHEBI:29105"/>
    </ligand>
</feature>
<feature type="binding site" evidence="1">
    <location>
        <position position="251"/>
    </location>
    <ligand>
        <name>Zn(2+)</name>
        <dbReference type="ChEBI" id="CHEBI:29105"/>
    </ligand>
</feature>
<sequence>MKIDINLNDDNKNYSVFIDELKNLKFKGKVAVITNSKVGGLYLGEILNLIDADEIFSVCIPDGEQYKNLAMIEYILEQLFVSRLERNSTLIALGGGVISDMTGFAASIYERGINFINIPTTLLAQVDASVGGKTGVNNKFGKNLIGTFYQPKAVYCETKFLNSLPNREFNAGMAEVIKMATMFDKDFFKFIQDNSVENSQILKQIIAKCVEIKAGVVAKDEKESGIRAVLNYGHTFAHVIEMQTNYKKFLHGEAVAIGINMANHLACKLGLLSKKDLDIIEQTLIKFGLPTTYRISDEEVFYDSFFLDKKSENKKIKFILPNGIGSYALRNDIDKNSVLDILRMFK</sequence>
<dbReference type="EC" id="4.2.3.4" evidence="1"/>
<dbReference type="EMBL" id="CP000487">
    <property type="protein sequence ID" value="ABK82554.1"/>
    <property type="molecule type" value="Genomic_DNA"/>
</dbReference>
<dbReference type="RefSeq" id="WP_002849352.1">
    <property type="nucleotide sequence ID" value="NC_008599.1"/>
</dbReference>
<dbReference type="SMR" id="A0RP96"/>
<dbReference type="GeneID" id="61064691"/>
<dbReference type="KEGG" id="cff:CFF8240_0854"/>
<dbReference type="eggNOG" id="COG0337">
    <property type="taxonomic scope" value="Bacteria"/>
</dbReference>
<dbReference type="HOGENOM" id="CLU_001201_0_2_7"/>
<dbReference type="UniPathway" id="UPA00053">
    <property type="reaction ID" value="UER00085"/>
</dbReference>
<dbReference type="Proteomes" id="UP000000760">
    <property type="component" value="Chromosome"/>
</dbReference>
<dbReference type="GO" id="GO:0005737">
    <property type="term" value="C:cytoplasm"/>
    <property type="evidence" value="ECO:0007669"/>
    <property type="project" value="UniProtKB-SubCell"/>
</dbReference>
<dbReference type="GO" id="GO:0003856">
    <property type="term" value="F:3-dehydroquinate synthase activity"/>
    <property type="evidence" value="ECO:0007669"/>
    <property type="project" value="UniProtKB-UniRule"/>
</dbReference>
<dbReference type="GO" id="GO:0046872">
    <property type="term" value="F:metal ion binding"/>
    <property type="evidence" value="ECO:0007669"/>
    <property type="project" value="UniProtKB-KW"/>
</dbReference>
<dbReference type="GO" id="GO:0000166">
    <property type="term" value="F:nucleotide binding"/>
    <property type="evidence" value="ECO:0007669"/>
    <property type="project" value="UniProtKB-KW"/>
</dbReference>
<dbReference type="GO" id="GO:0008652">
    <property type="term" value="P:amino acid biosynthetic process"/>
    <property type="evidence" value="ECO:0007669"/>
    <property type="project" value="UniProtKB-KW"/>
</dbReference>
<dbReference type="GO" id="GO:0009073">
    <property type="term" value="P:aromatic amino acid family biosynthetic process"/>
    <property type="evidence" value="ECO:0007669"/>
    <property type="project" value="UniProtKB-KW"/>
</dbReference>
<dbReference type="GO" id="GO:0009423">
    <property type="term" value="P:chorismate biosynthetic process"/>
    <property type="evidence" value="ECO:0007669"/>
    <property type="project" value="UniProtKB-UniRule"/>
</dbReference>
<dbReference type="CDD" id="cd08195">
    <property type="entry name" value="DHQS"/>
    <property type="match status" value="1"/>
</dbReference>
<dbReference type="FunFam" id="3.40.50.1970:FF:000007">
    <property type="entry name" value="Pentafunctional AROM polypeptide"/>
    <property type="match status" value="1"/>
</dbReference>
<dbReference type="Gene3D" id="3.40.50.1970">
    <property type="match status" value="1"/>
</dbReference>
<dbReference type="Gene3D" id="1.20.1090.10">
    <property type="entry name" value="Dehydroquinate synthase-like - alpha domain"/>
    <property type="match status" value="1"/>
</dbReference>
<dbReference type="HAMAP" id="MF_00110">
    <property type="entry name" value="DHQ_synthase"/>
    <property type="match status" value="1"/>
</dbReference>
<dbReference type="InterPro" id="IPR050071">
    <property type="entry name" value="Dehydroquinate_synthase"/>
</dbReference>
<dbReference type="InterPro" id="IPR016037">
    <property type="entry name" value="DHQ_synth_AroB"/>
</dbReference>
<dbReference type="InterPro" id="IPR030963">
    <property type="entry name" value="DHQ_synth_fam"/>
</dbReference>
<dbReference type="InterPro" id="IPR030960">
    <property type="entry name" value="DHQS/DOIS_N"/>
</dbReference>
<dbReference type="InterPro" id="IPR056179">
    <property type="entry name" value="DHQS_C"/>
</dbReference>
<dbReference type="NCBIfam" id="TIGR01357">
    <property type="entry name" value="aroB"/>
    <property type="match status" value="1"/>
</dbReference>
<dbReference type="PANTHER" id="PTHR43622">
    <property type="entry name" value="3-DEHYDROQUINATE SYNTHASE"/>
    <property type="match status" value="1"/>
</dbReference>
<dbReference type="PANTHER" id="PTHR43622:SF7">
    <property type="entry name" value="3-DEHYDROQUINATE SYNTHASE, CHLOROPLASTIC"/>
    <property type="match status" value="1"/>
</dbReference>
<dbReference type="Pfam" id="PF01761">
    <property type="entry name" value="DHQ_synthase"/>
    <property type="match status" value="1"/>
</dbReference>
<dbReference type="Pfam" id="PF24621">
    <property type="entry name" value="DHQS_C"/>
    <property type="match status" value="1"/>
</dbReference>
<dbReference type="PIRSF" id="PIRSF001455">
    <property type="entry name" value="DHQ_synth"/>
    <property type="match status" value="1"/>
</dbReference>
<dbReference type="SUPFAM" id="SSF56796">
    <property type="entry name" value="Dehydroquinate synthase-like"/>
    <property type="match status" value="1"/>
</dbReference>
<comment type="function">
    <text evidence="1">Catalyzes the conversion of 3-deoxy-D-arabino-heptulosonate 7-phosphate (DAHP) to dehydroquinate (DHQ).</text>
</comment>
<comment type="catalytic activity">
    <reaction evidence="1">
        <text>7-phospho-2-dehydro-3-deoxy-D-arabino-heptonate = 3-dehydroquinate + phosphate</text>
        <dbReference type="Rhea" id="RHEA:21968"/>
        <dbReference type="ChEBI" id="CHEBI:32364"/>
        <dbReference type="ChEBI" id="CHEBI:43474"/>
        <dbReference type="ChEBI" id="CHEBI:58394"/>
        <dbReference type="EC" id="4.2.3.4"/>
    </reaction>
</comment>
<comment type="cofactor">
    <cofactor evidence="1">
        <name>Co(2+)</name>
        <dbReference type="ChEBI" id="CHEBI:48828"/>
    </cofactor>
    <cofactor evidence="1">
        <name>Zn(2+)</name>
        <dbReference type="ChEBI" id="CHEBI:29105"/>
    </cofactor>
    <text evidence="1">Binds 1 divalent metal cation per subunit. Can use either Co(2+) or Zn(2+).</text>
</comment>
<comment type="cofactor">
    <cofactor evidence="1">
        <name>NAD(+)</name>
        <dbReference type="ChEBI" id="CHEBI:57540"/>
    </cofactor>
</comment>
<comment type="pathway">
    <text evidence="1">Metabolic intermediate biosynthesis; chorismate biosynthesis; chorismate from D-erythrose 4-phosphate and phosphoenolpyruvate: step 2/7.</text>
</comment>
<comment type="subcellular location">
    <subcellularLocation>
        <location evidence="1">Cytoplasm</location>
    </subcellularLocation>
</comment>
<comment type="similarity">
    <text evidence="1">Belongs to the sugar phosphate cyclases superfamily. Dehydroquinate synthase family.</text>
</comment>
<reference key="1">
    <citation type="submission" date="2006-11" db="EMBL/GenBank/DDBJ databases">
        <title>Sequence of Campylobacter fetus subsp. fetus 82-40.</title>
        <authorList>
            <person name="Fouts D.E."/>
            <person name="Nelson K.E."/>
        </authorList>
    </citation>
    <scope>NUCLEOTIDE SEQUENCE [LARGE SCALE GENOMIC DNA]</scope>
    <source>
        <strain>82-40</strain>
    </source>
</reference>
<gene>
    <name evidence="1" type="primary">aroB</name>
    <name type="ordered locus">CFF8240_0854</name>
</gene>